<dbReference type="EMBL" id="CP001131">
    <property type="protein sequence ID" value="ACG73346.1"/>
    <property type="molecule type" value="Genomic_DNA"/>
</dbReference>
<dbReference type="RefSeq" id="WP_012526147.1">
    <property type="nucleotide sequence ID" value="NC_011145.1"/>
</dbReference>
<dbReference type="SMR" id="B4UCU9"/>
<dbReference type="KEGG" id="ank:AnaeK_2119"/>
<dbReference type="HOGENOM" id="CLU_101379_2_0_7"/>
<dbReference type="OrthoDB" id="9808774at2"/>
<dbReference type="Proteomes" id="UP000001871">
    <property type="component" value="Chromosome"/>
</dbReference>
<dbReference type="GO" id="GO:0003677">
    <property type="term" value="F:DNA binding"/>
    <property type="evidence" value="ECO:0007669"/>
    <property type="project" value="UniProtKB-UniRule"/>
</dbReference>
<dbReference type="GO" id="GO:0070063">
    <property type="term" value="F:RNA polymerase binding"/>
    <property type="evidence" value="ECO:0007669"/>
    <property type="project" value="InterPro"/>
</dbReference>
<dbReference type="GO" id="GO:0006354">
    <property type="term" value="P:DNA-templated transcription elongation"/>
    <property type="evidence" value="ECO:0007669"/>
    <property type="project" value="TreeGrafter"/>
</dbReference>
<dbReference type="GO" id="GO:0032784">
    <property type="term" value="P:regulation of DNA-templated transcription elongation"/>
    <property type="evidence" value="ECO:0007669"/>
    <property type="project" value="UniProtKB-UniRule"/>
</dbReference>
<dbReference type="FunFam" id="1.10.287.180:FF:000001">
    <property type="entry name" value="Transcription elongation factor GreA"/>
    <property type="match status" value="1"/>
</dbReference>
<dbReference type="FunFam" id="3.10.50.30:FF:000001">
    <property type="entry name" value="Transcription elongation factor GreA"/>
    <property type="match status" value="1"/>
</dbReference>
<dbReference type="Gene3D" id="3.10.50.30">
    <property type="entry name" value="Transcription elongation factor, GreA/GreB, C-terminal domain"/>
    <property type="match status" value="1"/>
</dbReference>
<dbReference type="Gene3D" id="1.10.287.180">
    <property type="entry name" value="Transcription elongation factor, GreA/GreB, N-terminal domain"/>
    <property type="match status" value="1"/>
</dbReference>
<dbReference type="HAMAP" id="MF_00105">
    <property type="entry name" value="GreA_GreB"/>
    <property type="match status" value="1"/>
</dbReference>
<dbReference type="InterPro" id="IPR036953">
    <property type="entry name" value="GreA/GreB_C_sf"/>
</dbReference>
<dbReference type="InterPro" id="IPR018151">
    <property type="entry name" value="TF_GreA/GreB_CS"/>
</dbReference>
<dbReference type="InterPro" id="IPR006359">
    <property type="entry name" value="Tscrpt_elong_fac_GreA"/>
</dbReference>
<dbReference type="InterPro" id="IPR028624">
    <property type="entry name" value="Tscrpt_elong_fac_GreA/B"/>
</dbReference>
<dbReference type="InterPro" id="IPR001437">
    <property type="entry name" value="Tscrpt_elong_fac_GreA/B_C"/>
</dbReference>
<dbReference type="InterPro" id="IPR023459">
    <property type="entry name" value="Tscrpt_elong_fac_GreA/B_fam"/>
</dbReference>
<dbReference type="InterPro" id="IPR022691">
    <property type="entry name" value="Tscrpt_elong_fac_GreA/B_N"/>
</dbReference>
<dbReference type="InterPro" id="IPR036805">
    <property type="entry name" value="Tscrpt_elong_fac_GreA/B_N_sf"/>
</dbReference>
<dbReference type="NCBIfam" id="TIGR01462">
    <property type="entry name" value="greA"/>
    <property type="match status" value="1"/>
</dbReference>
<dbReference type="NCBIfam" id="NF001261">
    <property type="entry name" value="PRK00226.1-2"/>
    <property type="match status" value="1"/>
</dbReference>
<dbReference type="NCBIfam" id="NF001263">
    <property type="entry name" value="PRK00226.1-4"/>
    <property type="match status" value="1"/>
</dbReference>
<dbReference type="NCBIfam" id="NF001264">
    <property type="entry name" value="PRK00226.1-5"/>
    <property type="match status" value="1"/>
</dbReference>
<dbReference type="PANTHER" id="PTHR30437">
    <property type="entry name" value="TRANSCRIPTION ELONGATION FACTOR GREA"/>
    <property type="match status" value="1"/>
</dbReference>
<dbReference type="PANTHER" id="PTHR30437:SF4">
    <property type="entry name" value="TRANSCRIPTION ELONGATION FACTOR GREA"/>
    <property type="match status" value="1"/>
</dbReference>
<dbReference type="Pfam" id="PF01272">
    <property type="entry name" value="GreA_GreB"/>
    <property type="match status" value="1"/>
</dbReference>
<dbReference type="Pfam" id="PF03449">
    <property type="entry name" value="GreA_GreB_N"/>
    <property type="match status" value="1"/>
</dbReference>
<dbReference type="PIRSF" id="PIRSF006092">
    <property type="entry name" value="GreA_GreB"/>
    <property type="match status" value="1"/>
</dbReference>
<dbReference type="SUPFAM" id="SSF54534">
    <property type="entry name" value="FKBP-like"/>
    <property type="match status" value="1"/>
</dbReference>
<dbReference type="SUPFAM" id="SSF46557">
    <property type="entry name" value="GreA transcript cleavage protein, N-terminal domain"/>
    <property type="match status" value="1"/>
</dbReference>
<dbReference type="PROSITE" id="PS00829">
    <property type="entry name" value="GREAB_1"/>
    <property type="match status" value="1"/>
</dbReference>
<dbReference type="PROSITE" id="PS00830">
    <property type="entry name" value="GREAB_2"/>
    <property type="match status" value="1"/>
</dbReference>
<reference key="1">
    <citation type="submission" date="2008-08" db="EMBL/GenBank/DDBJ databases">
        <title>Complete sequence of Anaeromyxobacter sp. K.</title>
        <authorList>
            <consortium name="US DOE Joint Genome Institute"/>
            <person name="Lucas S."/>
            <person name="Copeland A."/>
            <person name="Lapidus A."/>
            <person name="Glavina del Rio T."/>
            <person name="Dalin E."/>
            <person name="Tice H."/>
            <person name="Bruce D."/>
            <person name="Goodwin L."/>
            <person name="Pitluck S."/>
            <person name="Saunders E."/>
            <person name="Brettin T."/>
            <person name="Detter J.C."/>
            <person name="Han C."/>
            <person name="Larimer F."/>
            <person name="Land M."/>
            <person name="Hauser L."/>
            <person name="Kyrpides N."/>
            <person name="Ovchinnikiva G."/>
            <person name="Beliaev A."/>
        </authorList>
    </citation>
    <scope>NUCLEOTIDE SEQUENCE [LARGE SCALE GENOMIC DNA]</scope>
    <source>
        <strain>K</strain>
    </source>
</reference>
<comment type="function">
    <text evidence="1">Necessary for efficient RNA polymerase transcription elongation past template-encoded arresting sites. The arresting sites in DNA have the property of trapping a certain fraction of elongating RNA polymerases that pass through, resulting in locked ternary complexes. Cleavage of the nascent transcript by cleavage factors such as GreA or GreB allows the resumption of elongation from the new 3'terminus. GreA releases sequences of 2 to 3 nucleotides.</text>
</comment>
<comment type="similarity">
    <text evidence="1">Belongs to the GreA/GreB family.</text>
</comment>
<feature type="chain" id="PRO_1000094148" description="Transcription elongation factor GreA">
    <location>
        <begin position="1"/>
        <end position="166"/>
    </location>
</feature>
<gene>
    <name evidence="1" type="primary">greA</name>
    <name type="ordered locus">AnaeK_2119</name>
</gene>
<keyword id="KW-0238">DNA-binding</keyword>
<keyword id="KW-0804">Transcription</keyword>
<keyword id="KW-0805">Transcription regulation</keyword>
<evidence type="ECO:0000255" key="1">
    <source>
        <dbReference type="HAMAP-Rule" id="MF_00105"/>
    </source>
</evidence>
<sequence length="166" mass="18272">MQRVPMTKGGLVRLKDELRRLKSVERPKIVKEIAEARAHGDLSENAEYHAAKEKQSHIEGRIAQVEHWIASAEVIDVTKHAGDRVVFGATVSLEDAESGDQVTYRIVGELEADLKQGKISVTSPIARALIGRSEGDTVVVRSPGGEKEYEIQSVAFVEEELPTESE</sequence>
<name>GREA_ANASK</name>
<proteinExistence type="inferred from homology"/>
<protein>
    <recommendedName>
        <fullName evidence="1">Transcription elongation factor GreA</fullName>
    </recommendedName>
    <alternativeName>
        <fullName evidence="1">Transcript cleavage factor GreA</fullName>
    </alternativeName>
</protein>
<accession>B4UCU9</accession>
<organism>
    <name type="scientific">Anaeromyxobacter sp. (strain K)</name>
    <dbReference type="NCBI Taxonomy" id="447217"/>
    <lineage>
        <taxon>Bacteria</taxon>
        <taxon>Pseudomonadati</taxon>
        <taxon>Myxococcota</taxon>
        <taxon>Myxococcia</taxon>
        <taxon>Myxococcales</taxon>
        <taxon>Cystobacterineae</taxon>
        <taxon>Anaeromyxobacteraceae</taxon>
        <taxon>Anaeromyxobacter</taxon>
    </lineage>
</organism>